<sequence>MSSADKNLSSYSGEIPNLSSRVFGIVVAEWNEEITEPLYEGAVEVLLKHGIPKANIIRTNVPGTFELSLGAQWLAMKKGVDAVICLGCVIQGETRHFDFICNAVSIGITEVNLKFNKPVIFGVLTTDNKEQAFDRAGGKHGNKGDEAAITALKMLAQTI</sequence>
<feature type="chain" id="PRO_1000040412" description="6,7-dimethyl-8-ribityllumazine synthase">
    <location>
        <begin position="1"/>
        <end position="159"/>
    </location>
</feature>
<feature type="active site" description="Proton donor" evidence="1">
    <location>
        <position position="96"/>
    </location>
</feature>
<feature type="binding site" evidence="1">
    <location>
        <position position="30"/>
    </location>
    <ligand>
        <name>5-amino-6-(D-ribitylamino)uracil</name>
        <dbReference type="ChEBI" id="CHEBI:15934"/>
    </ligand>
</feature>
<feature type="binding site" evidence="1">
    <location>
        <begin position="64"/>
        <end position="66"/>
    </location>
    <ligand>
        <name>5-amino-6-(D-ribitylamino)uracil</name>
        <dbReference type="ChEBI" id="CHEBI:15934"/>
    </ligand>
</feature>
<feature type="binding site" evidence="1">
    <location>
        <begin position="88"/>
        <end position="90"/>
    </location>
    <ligand>
        <name>5-amino-6-(D-ribitylamino)uracil</name>
        <dbReference type="ChEBI" id="CHEBI:15934"/>
    </ligand>
</feature>
<feature type="binding site" evidence="1">
    <location>
        <begin position="93"/>
        <end position="94"/>
    </location>
    <ligand>
        <name>(2S)-2-hydroxy-3-oxobutyl phosphate</name>
        <dbReference type="ChEBI" id="CHEBI:58830"/>
    </ligand>
</feature>
<feature type="binding site" evidence="1">
    <location>
        <position position="121"/>
    </location>
    <ligand>
        <name>5-amino-6-(D-ribitylamino)uracil</name>
        <dbReference type="ChEBI" id="CHEBI:15934"/>
    </ligand>
</feature>
<feature type="binding site" evidence="1">
    <location>
        <position position="135"/>
    </location>
    <ligand>
        <name>(2S)-2-hydroxy-3-oxobutyl phosphate</name>
        <dbReference type="ChEBI" id="CHEBI:58830"/>
    </ligand>
</feature>
<gene>
    <name evidence="1" type="primary">ribH</name>
    <name type="ordered locus">CHU_3720</name>
</gene>
<accession>Q11NR0</accession>
<proteinExistence type="inferred from homology"/>
<name>RISB_CYTH3</name>
<organism>
    <name type="scientific">Cytophaga hutchinsonii (strain ATCC 33406 / DSM 1761 / CIP 103989 / NBRC 15051 / NCIMB 9469 / D465)</name>
    <dbReference type="NCBI Taxonomy" id="269798"/>
    <lineage>
        <taxon>Bacteria</taxon>
        <taxon>Pseudomonadati</taxon>
        <taxon>Bacteroidota</taxon>
        <taxon>Cytophagia</taxon>
        <taxon>Cytophagales</taxon>
        <taxon>Cytophagaceae</taxon>
        <taxon>Cytophaga</taxon>
    </lineage>
</organism>
<keyword id="KW-1185">Reference proteome</keyword>
<keyword id="KW-0686">Riboflavin biosynthesis</keyword>
<keyword id="KW-0808">Transferase</keyword>
<reference key="1">
    <citation type="journal article" date="2007" name="Appl. Environ. Microbiol.">
        <title>Genome sequence of the cellulolytic gliding bacterium Cytophaga hutchinsonii.</title>
        <authorList>
            <person name="Xie G."/>
            <person name="Bruce D.C."/>
            <person name="Challacombe J.F."/>
            <person name="Chertkov O."/>
            <person name="Detter J.C."/>
            <person name="Gilna P."/>
            <person name="Han C.S."/>
            <person name="Lucas S."/>
            <person name="Misra M."/>
            <person name="Myers G.L."/>
            <person name="Richardson P."/>
            <person name="Tapia R."/>
            <person name="Thayer N."/>
            <person name="Thompson L.S."/>
            <person name="Brettin T.S."/>
            <person name="Henrissat B."/>
            <person name="Wilson D.B."/>
            <person name="McBride M.J."/>
        </authorList>
    </citation>
    <scope>NUCLEOTIDE SEQUENCE [LARGE SCALE GENOMIC DNA]</scope>
    <source>
        <strain>ATCC 33406 / DSM 1761 / JCM 20678 / CIP 103989 / IAM 12607 / NBRC 15051 / NCIMB 9469 / D465</strain>
    </source>
</reference>
<dbReference type="EC" id="2.5.1.78" evidence="1"/>
<dbReference type="EMBL" id="CP000383">
    <property type="protein sequence ID" value="ABG60953.1"/>
    <property type="molecule type" value="Genomic_DNA"/>
</dbReference>
<dbReference type="RefSeq" id="WP_011587058.1">
    <property type="nucleotide sequence ID" value="NC_008255.1"/>
</dbReference>
<dbReference type="SMR" id="Q11NR0"/>
<dbReference type="STRING" id="269798.CHU_3720"/>
<dbReference type="KEGG" id="chu:CHU_3720"/>
<dbReference type="eggNOG" id="COG0054">
    <property type="taxonomic scope" value="Bacteria"/>
</dbReference>
<dbReference type="HOGENOM" id="CLU_089358_1_2_10"/>
<dbReference type="OrthoDB" id="9809709at2"/>
<dbReference type="UniPathway" id="UPA00275">
    <property type="reaction ID" value="UER00404"/>
</dbReference>
<dbReference type="Proteomes" id="UP000001822">
    <property type="component" value="Chromosome"/>
</dbReference>
<dbReference type="GO" id="GO:0005829">
    <property type="term" value="C:cytosol"/>
    <property type="evidence" value="ECO:0007669"/>
    <property type="project" value="TreeGrafter"/>
</dbReference>
<dbReference type="GO" id="GO:0009349">
    <property type="term" value="C:riboflavin synthase complex"/>
    <property type="evidence" value="ECO:0007669"/>
    <property type="project" value="InterPro"/>
</dbReference>
<dbReference type="GO" id="GO:0000906">
    <property type="term" value="F:6,7-dimethyl-8-ribityllumazine synthase activity"/>
    <property type="evidence" value="ECO:0007669"/>
    <property type="project" value="UniProtKB-UniRule"/>
</dbReference>
<dbReference type="GO" id="GO:0009231">
    <property type="term" value="P:riboflavin biosynthetic process"/>
    <property type="evidence" value="ECO:0007669"/>
    <property type="project" value="UniProtKB-UniRule"/>
</dbReference>
<dbReference type="CDD" id="cd09209">
    <property type="entry name" value="Lumazine_synthase-I"/>
    <property type="match status" value="1"/>
</dbReference>
<dbReference type="Gene3D" id="3.40.50.960">
    <property type="entry name" value="Lumazine/riboflavin synthase"/>
    <property type="match status" value="1"/>
</dbReference>
<dbReference type="HAMAP" id="MF_00178">
    <property type="entry name" value="Lumazine_synth"/>
    <property type="match status" value="1"/>
</dbReference>
<dbReference type="InterPro" id="IPR034964">
    <property type="entry name" value="LS"/>
</dbReference>
<dbReference type="InterPro" id="IPR002180">
    <property type="entry name" value="LS/RS"/>
</dbReference>
<dbReference type="InterPro" id="IPR036467">
    <property type="entry name" value="LS/RS_sf"/>
</dbReference>
<dbReference type="NCBIfam" id="TIGR00114">
    <property type="entry name" value="lumazine-synth"/>
    <property type="match status" value="1"/>
</dbReference>
<dbReference type="PANTHER" id="PTHR21058:SF0">
    <property type="entry name" value="6,7-DIMETHYL-8-RIBITYLLUMAZINE SYNTHASE"/>
    <property type="match status" value="1"/>
</dbReference>
<dbReference type="PANTHER" id="PTHR21058">
    <property type="entry name" value="6,7-DIMETHYL-8-RIBITYLLUMAZINE SYNTHASE DMRL SYNTHASE LUMAZINE SYNTHASE"/>
    <property type="match status" value="1"/>
</dbReference>
<dbReference type="Pfam" id="PF00885">
    <property type="entry name" value="DMRL_synthase"/>
    <property type="match status" value="1"/>
</dbReference>
<dbReference type="SUPFAM" id="SSF52121">
    <property type="entry name" value="Lumazine synthase"/>
    <property type="match status" value="1"/>
</dbReference>
<comment type="function">
    <text evidence="1">Catalyzes the formation of 6,7-dimethyl-8-ribityllumazine by condensation of 5-amino-6-(D-ribitylamino)uracil with 3,4-dihydroxy-2-butanone 4-phosphate. This is the penultimate step in the biosynthesis of riboflavin.</text>
</comment>
<comment type="catalytic activity">
    <reaction evidence="1">
        <text>(2S)-2-hydroxy-3-oxobutyl phosphate + 5-amino-6-(D-ribitylamino)uracil = 6,7-dimethyl-8-(1-D-ribityl)lumazine + phosphate + 2 H2O + H(+)</text>
        <dbReference type="Rhea" id="RHEA:26152"/>
        <dbReference type="ChEBI" id="CHEBI:15377"/>
        <dbReference type="ChEBI" id="CHEBI:15378"/>
        <dbReference type="ChEBI" id="CHEBI:15934"/>
        <dbReference type="ChEBI" id="CHEBI:43474"/>
        <dbReference type="ChEBI" id="CHEBI:58201"/>
        <dbReference type="ChEBI" id="CHEBI:58830"/>
        <dbReference type="EC" id="2.5.1.78"/>
    </reaction>
</comment>
<comment type="pathway">
    <text evidence="1">Cofactor biosynthesis; riboflavin biosynthesis; riboflavin from 2-hydroxy-3-oxobutyl phosphate and 5-amino-6-(D-ribitylamino)uracil: step 1/2.</text>
</comment>
<comment type="similarity">
    <text evidence="1">Belongs to the DMRL synthase family.</text>
</comment>
<evidence type="ECO:0000255" key="1">
    <source>
        <dbReference type="HAMAP-Rule" id="MF_00178"/>
    </source>
</evidence>
<protein>
    <recommendedName>
        <fullName evidence="1">6,7-dimethyl-8-ribityllumazine synthase</fullName>
        <shortName evidence="1">DMRL synthase</shortName>
        <shortName evidence="1">LS</shortName>
        <shortName evidence="1">Lumazine synthase</shortName>
        <ecNumber evidence="1">2.5.1.78</ecNumber>
    </recommendedName>
</protein>